<dbReference type="EC" id="2.1.1.163" evidence="1"/>
<dbReference type="EMBL" id="BX571856">
    <property type="protein sequence ID" value="CAG40478.1"/>
    <property type="molecule type" value="Genomic_DNA"/>
</dbReference>
<dbReference type="RefSeq" id="WP_000774679.1">
    <property type="nucleotide sequence ID" value="NC_002952.2"/>
</dbReference>
<dbReference type="SMR" id="Q6GGU0"/>
<dbReference type="KEGG" id="sar:SAR1480"/>
<dbReference type="HOGENOM" id="CLU_037990_0_0_9"/>
<dbReference type="UniPathway" id="UPA00079">
    <property type="reaction ID" value="UER00169"/>
</dbReference>
<dbReference type="Proteomes" id="UP000000596">
    <property type="component" value="Chromosome"/>
</dbReference>
<dbReference type="GO" id="GO:0043770">
    <property type="term" value="F:demethylmenaquinone methyltransferase activity"/>
    <property type="evidence" value="ECO:0007669"/>
    <property type="project" value="UniProtKB-UniRule"/>
</dbReference>
<dbReference type="GO" id="GO:0009234">
    <property type="term" value="P:menaquinone biosynthetic process"/>
    <property type="evidence" value="ECO:0007669"/>
    <property type="project" value="UniProtKB-UniRule"/>
</dbReference>
<dbReference type="GO" id="GO:0032259">
    <property type="term" value="P:methylation"/>
    <property type="evidence" value="ECO:0007669"/>
    <property type="project" value="UniProtKB-KW"/>
</dbReference>
<dbReference type="CDD" id="cd02440">
    <property type="entry name" value="AdoMet_MTases"/>
    <property type="match status" value="1"/>
</dbReference>
<dbReference type="FunFam" id="3.40.50.150:FF:000086">
    <property type="entry name" value="Demethylmenaquinone methyltransferase"/>
    <property type="match status" value="1"/>
</dbReference>
<dbReference type="Gene3D" id="3.40.50.150">
    <property type="entry name" value="Vaccinia Virus protein VP39"/>
    <property type="match status" value="1"/>
</dbReference>
<dbReference type="HAMAP" id="MF_01813">
    <property type="entry name" value="MenG_UbiE_methyltr"/>
    <property type="match status" value="1"/>
</dbReference>
<dbReference type="InterPro" id="IPR029063">
    <property type="entry name" value="SAM-dependent_MTases_sf"/>
</dbReference>
<dbReference type="InterPro" id="IPR004033">
    <property type="entry name" value="UbiE/COQ5_MeTrFase"/>
</dbReference>
<dbReference type="InterPro" id="IPR023576">
    <property type="entry name" value="UbiE/COQ5_MeTrFase_CS"/>
</dbReference>
<dbReference type="NCBIfam" id="TIGR01934">
    <property type="entry name" value="MenG_MenH_UbiE"/>
    <property type="match status" value="1"/>
</dbReference>
<dbReference type="NCBIfam" id="NF001243">
    <property type="entry name" value="PRK00216.1-4"/>
    <property type="match status" value="1"/>
</dbReference>
<dbReference type="NCBIfam" id="NF001244">
    <property type="entry name" value="PRK00216.1-5"/>
    <property type="match status" value="1"/>
</dbReference>
<dbReference type="PANTHER" id="PTHR43591:SF24">
    <property type="entry name" value="2-METHOXY-6-POLYPRENYL-1,4-BENZOQUINOL METHYLASE, MITOCHONDRIAL"/>
    <property type="match status" value="1"/>
</dbReference>
<dbReference type="PANTHER" id="PTHR43591">
    <property type="entry name" value="METHYLTRANSFERASE"/>
    <property type="match status" value="1"/>
</dbReference>
<dbReference type="Pfam" id="PF01209">
    <property type="entry name" value="Ubie_methyltran"/>
    <property type="match status" value="1"/>
</dbReference>
<dbReference type="SUPFAM" id="SSF53335">
    <property type="entry name" value="S-adenosyl-L-methionine-dependent methyltransferases"/>
    <property type="match status" value="1"/>
</dbReference>
<dbReference type="PROSITE" id="PS51608">
    <property type="entry name" value="SAM_MT_UBIE"/>
    <property type="match status" value="1"/>
</dbReference>
<dbReference type="PROSITE" id="PS01183">
    <property type="entry name" value="UBIE_1"/>
    <property type="match status" value="1"/>
</dbReference>
<dbReference type="PROSITE" id="PS01184">
    <property type="entry name" value="UBIE_2"/>
    <property type="match status" value="1"/>
</dbReference>
<gene>
    <name evidence="1" type="primary">menG</name>
    <name type="ordered locus">SAR1480</name>
</gene>
<organism>
    <name type="scientific">Staphylococcus aureus (strain MRSA252)</name>
    <dbReference type="NCBI Taxonomy" id="282458"/>
    <lineage>
        <taxon>Bacteria</taxon>
        <taxon>Bacillati</taxon>
        <taxon>Bacillota</taxon>
        <taxon>Bacilli</taxon>
        <taxon>Bacillales</taxon>
        <taxon>Staphylococcaceae</taxon>
        <taxon>Staphylococcus</taxon>
    </lineage>
</organism>
<keyword id="KW-0474">Menaquinone biosynthesis</keyword>
<keyword id="KW-0489">Methyltransferase</keyword>
<keyword id="KW-0949">S-adenosyl-L-methionine</keyword>
<keyword id="KW-0808">Transferase</keyword>
<proteinExistence type="inferred from homology"/>
<feature type="chain" id="PRO_0000193330" description="Demethylmenaquinone methyltransferase">
    <location>
        <begin position="1"/>
        <end position="241"/>
    </location>
</feature>
<feature type="binding site" evidence="1">
    <location>
        <position position="60"/>
    </location>
    <ligand>
        <name>S-adenosyl-L-methionine</name>
        <dbReference type="ChEBI" id="CHEBI:59789"/>
    </ligand>
</feature>
<feature type="binding site" evidence="1">
    <location>
        <position position="81"/>
    </location>
    <ligand>
        <name>S-adenosyl-L-methionine</name>
        <dbReference type="ChEBI" id="CHEBI:59789"/>
    </ligand>
</feature>
<feature type="binding site" evidence="1">
    <location>
        <begin position="106"/>
        <end position="107"/>
    </location>
    <ligand>
        <name>S-adenosyl-L-methionine</name>
        <dbReference type="ChEBI" id="CHEBI:59789"/>
    </ligand>
</feature>
<accession>Q6GGU0</accession>
<evidence type="ECO:0000255" key="1">
    <source>
        <dbReference type="HAMAP-Rule" id="MF_01813"/>
    </source>
</evidence>
<comment type="function">
    <text evidence="1">Methyltransferase required for the conversion of demethylmenaquinol (DMKH2) to menaquinol (MKH2).</text>
</comment>
<comment type="catalytic activity">
    <reaction evidence="1">
        <text>a 2-demethylmenaquinol + S-adenosyl-L-methionine = a menaquinol + S-adenosyl-L-homocysteine + H(+)</text>
        <dbReference type="Rhea" id="RHEA:42640"/>
        <dbReference type="Rhea" id="RHEA-COMP:9539"/>
        <dbReference type="Rhea" id="RHEA-COMP:9563"/>
        <dbReference type="ChEBI" id="CHEBI:15378"/>
        <dbReference type="ChEBI" id="CHEBI:18151"/>
        <dbReference type="ChEBI" id="CHEBI:55437"/>
        <dbReference type="ChEBI" id="CHEBI:57856"/>
        <dbReference type="ChEBI" id="CHEBI:59789"/>
        <dbReference type="EC" id="2.1.1.163"/>
    </reaction>
</comment>
<comment type="pathway">
    <text evidence="1">Quinol/quinone metabolism; menaquinone biosynthesis; menaquinol from 1,4-dihydroxy-2-naphthoate: step 2/2.</text>
</comment>
<comment type="similarity">
    <text evidence="1">Belongs to the class I-like SAM-binding methyltransferase superfamily. MenG/UbiE family.</text>
</comment>
<sequence>MADNKANKEQVHRVFQNISKKYDRLNNIISFEQHKVWRKRVMKDMGVRKGMKALDVCCGTGDWTIALSKAVGSTGEVTGIDFSENMLEVGKEKTASMENVKLVHGDAMELPFEDNSFDYVTIGFGLRNVPDYLVALKEMNRVLKPGGMVVCLETSQPTLPVFKQMYALYFKFVMPIFGKLFAKSKEEYEWLQQSTFNFPGKEELKRMFEEADFINVRVRSFTGGVAAMHLGYKEKDNTKGD</sequence>
<reference key="1">
    <citation type="journal article" date="2004" name="Proc. Natl. Acad. Sci. U.S.A.">
        <title>Complete genomes of two clinical Staphylococcus aureus strains: evidence for the rapid evolution of virulence and drug resistance.</title>
        <authorList>
            <person name="Holden M.T.G."/>
            <person name="Feil E.J."/>
            <person name="Lindsay J.A."/>
            <person name="Peacock S.J."/>
            <person name="Day N.P.J."/>
            <person name="Enright M.C."/>
            <person name="Foster T.J."/>
            <person name="Moore C.E."/>
            <person name="Hurst L."/>
            <person name="Atkin R."/>
            <person name="Barron A."/>
            <person name="Bason N."/>
            <person name="Bentley S.D."/>
            <person name="Chillingworth C."/>
            <person name="Chillingworth T."/>
            <person name="Churcher C."/>
            <person name="Clark L."/>
            <person name="Corton C."/>
            <person name="Cronin A."/>
            <person name="Doggett J."/>
            <person name="Dowd L."/>
            <person name="Feltwell T."/>
            <person name="Hance Z."/>
            <person name="Harris B."/>
            <person name="Hauser H."/>
            <person name="Holroyd S."/>
            <person name="Jagels K."/>
            <person name="James K.D."/>
            <person name="Lennard N."/>
            <person name="Line A."/>
            <person name="Mayes R."/>
            <person name="Moule S."/>
            <person name="Mungall K."/>
            <person name="Ormond D."/>
            <person name="Quail M.A."/>
            <person name="Rabbinowitsch E."/>
            <person name="Rutherford K.M."/>
            <person name="Sanders M."/>
            <person name="Sharp S."/>
            <person name="Simmonds M."/>
            <person name="Stevens K."/>
            <person name="Whitehead S."/>
            <person name="Barrell B.G."/>
            <person name="Spratt B.G."/>
            <person name="Parkhill J."/>
        </authorList>
    </citation>
    <scope>NUCLEOTIDE SEQUENCE [LARGE SCALE GENOMIC DNA]</scope>
    <source>
        <strain>MRSA252</strain>
    </source>
</reference>
<name>MENG_STAAR</name>
<protein>
    <recommendedName>
        <fullName evidence="1">Demethylmenaquinone methyltransferase</fullName>
        <ecNumber evidence="1">2.1.1.163</ecNumber>
    </recommendedName>
</protein>